<keyword id="KW-0963">Cytoplasm</keyword>
<keyword id="KW-0350">Heme biosynthesis</keyword>
<keyword id="KW-0479">Metal-binding</keyword>
<keyword id="KW-0560">Oxidoreductase</keyword>
<keyword id="KW-0627">Porphyrin biosynthesis</keyword>
<keyword id="KW-1185">Reference proteome</keyword>
<feature type="chain" id="PRO_0000109905" description="Oxygen-dependent coproporphyrinogen-III oxidase">
    <location>
        <begin position="1"/>
        <end position="302"/>
    </location>
</feature>
<feature type="region of interest" description="Important for dimerization" evidence="1">
    <location>
        <begin position="242"/>
        <end position="277"/>
    </location>
</feature>
<feature type="active site" description="Proton donor" evidence="1">
    <location>
        <position position="108"/>
    </location>
</feature>
<feature type="binding site" evidence="1">
    <location>
        <position position="94"/>
    </location>
    <ligand>
        <name>substrate</name>
    </ligand>
</feature>
<feature type="binding site" evidence="1">
    <location>
        <position position="98"/>
    </location>
    <ligand>
        <name>a divalent metal cation</name>
        <dbReference type="ChEBI" id="CHEBI:60240"/>
    </ligand>
</feature>
<feature type="binding site" evidence="1">
    <location>
        <position position="108"/>
    </location>
    <ligand>
        <name>a divalent metal cation</name>
        <dbReference type="ChEBI" id="CHEBI:60240"/>
    </ligand>
</feature>
<feature type="binding site" evidence="1">
    <location>
        <begin position="110"/>
        <end position="112"/>
    </location>
    <ligand>
        <name>substrate</name>
    </ligand>
</feature>
<feature type="binding site" evidence="1">
    <location>
        <position position="147"/>
    </location>
    <ligand>
        <name>a divalent metal cation</name>
        <dbReference type="ChEBI" id="CHEBI:60240"/>
    </ligand>
</feature>
<feature type="binding site" evidence="1">
    <location>
        <position position="177"/>
    </location>
    <ligand>
        <name>a divalent metal cation</name>
        <dbReference type="ChEBI" id="CHEBI:60240"/>
    </ligand>
</feature>
<feature type="binding site" evidence="1">
    <location>
        <begin position="260"/>
        <end position="262"/>
    </location>
    <ligand>
        <name>substrate</name>
    </ligand>
</feature>
<feature type="site" description="Important for dimerization" evidence="1">
    <location>
        <position position="177"/>
    </location>
</feature>
<name>HEM6_PHOLL</name>
<protein>
    <recommendedName>
        <fullName evidence="1">Oxygen-dependent coproporphyrinogen-III oxidase</fullName>
        <shortName evidence="1">CPO</shortName>
        <shortName evidence="1">Coprogen oxidase</shortName>
        <shortName evidence="1">Coproporphyrinogenase</shortName>
        <ecNumber evidence="1">1.3.3.3</ecNumber>
    </recommendedName>
</protein>
<proteinExistence type="inferred from homology"/>
<gene>
    <name evidence="1" type="primary">hemF</name>
    <name type="ordered locus">plu1383</name>
</gene>
<sequence>MNTPNINQIKSFFLSLQDEICQQLEQIDGKEKFTEQCWQREEGGGGRSRIMKEGTIFEQAGANFSHVSGDMLPLSATAHRPELVGRHYQAMGVSLVIHPLNPYIPTSHANVRFFIAEKEGEAPVWWFGGGFDLTPYYGFKEDAIHWHTTARNICRPYGEDVYPKYKEWCDNYFYIKHRNEARGIGGLFYDDLNTPDFEHCFNFTQDIGKGFLSAYLPIVEKRKEILWGERERQFQLYRRGRYVEFNLVWDRGTLFGLQSGGRTESILMSMPPLARWEHDYHPEPESAEAALYTDFLPAKNWI</sequence>
<evidence type="ECO:0000255" key="1">
    <source>
        <dbReference type="HAMAP-Rule" id="MF_00333"/>
    </source>
</evidence>
<organism>
    <name type="scientific">Photorhabdus laumondii subsp. laumondii (strain DSM 15139 / CIP 105565 / TT01)</name>
    <name type="common">Photorhabdus luminescens subsp. laumondii</name>
    <dbReference type="NCBI Taxonomy" id="243265"/>
    <lineage>
        <taxon>Bacteria</taxon>
        <taxon>Pseudomonadati</taxon>
        <taxon>Pseudomonadota</taxon>
        <taxon>Gammaproteobacteria</taxon>
        <taxon>Enterobacterales</taxon>
        <taxon>Morganellaceae</taxon>
        <taxon>Photorhabdus</taxon>
    </lineage>
</organism>
<dbReference type="EC" id="1.3.3.3" evidence="1"/>
<dbReference type="EMBL" id="BX571863">
    <property type="protein sequence ID" value="CAE13676.1"/>
    <property type="molecule type" value="Genomic_DNA"/>
</dbReference>
<dbReference type="RefSeq" id="WP_011145691.1">
    <property type="nucleotide sequence ID" value="NC_005126.1"/>
</dbReference>
<dbReference type="SMR" id="Q7N6Z9"/>
<dbReference type="STRING" id="243265.plu1383"/>
<dbReference type="GeneID" id="48847662"/>
<dbReference type="KEGG" id="plu:plu1383"/>
<dbReference type="eggNOG" id="COG0408">
    <property type="taxonomic scope" value="Bacteria"/>
</dbReference>
<dbReference type="HOGENOM" id="CLU_026169_0_1_6"/>
<dbReference type="OrthoDB" id="9777553at2"/>
<dbReference type="UniPathway" id="UPA00251">
    <property type="reaction ID" value="UER00322"/>
</dbReference>
<dbReference type="Proteomes" id="UP000002514">
    <property type="component" value="Chromosome"/>
</dbReference>
<dbReference type="GO" id="GO:0005737">
    <property type="term" value="C:cytoplasm"/>
    <property type="evidence" value="ECO:0007669"/>
    <property type="project" value="UniProtKB-SubCell"/>
</dbReference>
<dbReference type="GO" id="GO:0004109">
    <property type="term" value="F:coproporphyrinogen oxidase activity"/>
    <property type="evidence" value="ECO:0007669"/>
    <property type="project" value="UniProtKB-UniRule"/>
</dbReference>
<dbReference type="GO" id="GO:0046872">
    <property type="term" value="F:metal ion binding"/>
    <property type="evidence" value="ECO:0007669"/>
    <property type="project" value="UniProtKB-KW"/>
</dbReference>
<dbReference type="GO" id="GO:0042803">
    <property type="term" value="F:protein homodimerization activity"/>
    <property type="evidence" value="ECO:0000250"/>
    <property type="project" value="UniProtKB"/>
</dbReference>
<dbReference type="GO" id="GO:0006782">
    <property type="term" value="P:protoporphyrinogen IX biosynthetic process"/>
    <property type="evidence" value="ECO:0007669"/>
    <property type="project" value="UniProtKB-UniRule"/>
</dbReference>
<dbReference type="FunFam" id="3.40.1500.10:FF:000001">
    <property type="entry name" value="Oxygen-dependent coproporphyrinogen-III oxidase"/>
    <property type="match status" value="1"/>
</dbReference>
<dbReference type="Gene3D" id="3.40.1500.10">
    <property type="entry name" value="Coproporphyrinogen III oxidase, aerobic"/>
    <property type="match status" value="1"/>
</dbReference>
<dbReference type="HAMAP" id="MF_00333">
    <property type="entry name" value="Coprogen_oxidas"/>
    <property type="match status" value="1"/>
</dbReference>
<dbReference type="InterPro" id="IPR001260">
    <property type="entry name" value="Coprogen_oxidase_aer"/>
</dbReference>
<dbReference type="InterPro" id="IPR036406">
    <property type="entry name" value="Coprogen_oxidase_aer_sf"/>
</dbReference>
<dbReference type="InterPro" id="IPR018375">
    <property type="entry name" value="Coprogen_oxidase_CS"/>
</dbReference>
<dbReference type="NCBIfam" id="NF003727">
    <property type="entry name" value="PRK05330.1"/>
    <property type="match status" value="1"/>
</dbReference>
<dbReference type="PANTHER" id="PTHR10755">
    <property type="entry name" value="COPROPORPHYRINOGEN III OXIDASE, MITOCHONDRIAL"/>
    <property type="match status" value="1"/>
</dbReference>
<dbReference type="PANTHER" id="PTHR10755:SF0">
    <property type="entry name" value="OXYGEN-DEPENDENT COPROPORPHYRINOGEN-III OXIDASE, MITOCHONDRIAL"/>
    <property type="match status" value="1"/>
</dbReference>
<dbReference type="Pfam" id="PF01218">
    <property type="entry name" value="Coprogen_oxidas"/>
    <property type="match status" value="1"/>
</dbReference>
<dbReference type="PIRSF" id="PIRSF000166">
    <property type="entry name" value="Coproporphyri_ox"/>
    <property type="match status" value="1"/>
</dbReference>
<dbReference type="PRINTS" id="PR00073">
    <property type="entry name" value="COPRGNOXDASE"/>
</dbReference>
<dbReference type="SUPFAM" id="SSF102886">
    <property type="entry name" value="Coproporphyrinogen III oxidase"/>
    <property type="match status" value="1"/>
</dbReference>
<dbReference type="PROSITE" id="PS01021">
    <property type="entry name" value="COPROGEN_OXIDASE"/>
    <property type="match status" value="1"/>
</dbReference>
<accession>Q7N6Z9</accession>
<reference key="1">
    <citation type="journal article" date="2003" name="Nat. Biotechnol.">
        <title>The genome sequence of the entomopathogenic bacterium Photorhabdus luminescens.</title>
        <authorList>
            <person name="Duchaud E."/>
            <person name="Rusniok C."/>
            <person name="Frangeul L."/>
            <person name="Buchrieser C."/>
            <person name="Givaudan A."/>
            <person name="Taourit S."/>
            <person name="Bocs S."/>
            <person name="Boursaux-Eude C."/>
            <person name="Chandler M."/>
            <person name="Charles J.-F."/>
            <person name="Dassa E."/>
            <person name="Derose R."/>
            <person name="Derzelle S."/>
            <person name="Freyssinet G."/>
            <person name="Gaudriault S."/>
            <person name="Medigue C."/>
            <person name="Lanois A."/>
            <person name="Powell K."/>
            <person name="Siguier P."/>
            <person name="Vincent R."/>
            <person name="Wingate V."/>
            <person name="Zouine M."/>
            <person name="Glaser P."/>
            <person name="Boemare N."/>
            <person name="Danchin A."/>
            <person name="Kunst F."/>
        </authorList>
    </citation>
    <scope>NUCLEOTIDE SEQUENCE [LARGE SCALE GENOMIC DNA]</scope>
    <source>
        <strain>DSM 15139 / CIP 105565 / TT01</strain>
    </source>
</reference>
<comment type="function">
    <text evidence="1">Involved in the heme biosynthesis. Catalyzes the aerobic oxidative decarboxylation of propionate groups of rings A and B of coproporphyrinogen-III to yield the vinyl groups in protoporphyrinogen-IX.</text>
</comment>
<comment type="catalytic activity">
    <reaction evidence="1">
        <text>coproporphyrinogen III + O2 + 2 H(+) = protoporphyrinogen IX + 2 CO2 + 2 H2O</text>
        <dbReference type="Rhea" id="RHEA:18257"/>
        <dbReference type="ChEBI" id="CHEBI:15377"/>
        <dbReference type="ChEBI" id="CHEBI:15378"/>
        <dbReference type="ChEBI" id="CHEBI:15379"/>
        <dbReference type="ChEBI" id="CHEBI:16526"/>
        <dbReference type="ChEBI" id="CHEBI:57307"/>
        <dbReference type="ChEBI" id="CHEBI:57309"/>
        <dbReference type="EC" id="1.3.3.3"/>
    </reaction>
</comment>
<comment type="cofactor">
    <cofactor evidence="1">
        <name>a divalent metal cation</name>
        <dbReference type="ChEBI" id="CHEBI:60240"/>
    </cofactor>
</comment>
<comment type="pathway">
    <text evidence="1">Porphyrin-containing compound metabolism; protoporphyrin-IX biosynthesis; protoporphyrinogen-IX from coproporphyrinogen-III (O2 route): step 1/1.</text>
</comment>
<comment type="subunit">
    <text evidence="1">Homodimer.</text>
</comment>
<comment type="subcellular location">
    <subcellularLocation>
        <location evidence="1">Cytoplasm</location>
    </subcellularLocation>
</comment>
<comment type="similarity">
    <text evidence="1">Belongs to the aerobic coproporphyrinogen-III oxidase family.</text>
</comment>